<feature type="chain" id="PRO_1000115519" description="Trigger factor">
    <location>
        <begin position="1"/>
        <end position="442"/>
    </location>
</feature>
<feature type="domain" description="PPIase FKBP-type" evidence="1">
    <location>
        <begin position="176"/>
        <end position="259"/>
    </location>
</feature>
<dbReference type="EC" id="5.2.1.8" evidence="1"/>
<dbReference type="EMBL" id="AM884177">
    <property type="protein sequence ID" value="CAP06474.1"/>
    <property type="molecule type" value="Genomic_DNA"/>
</dbReference>
<dbReference type="RefSeq" id="WP_009873310.1">
    <property type="nucleotide sequence ID" value="NC_010280.2"/>
</dbReference>
<dbReference type="SMR" id="B0BAG2"/>
<dbReference type="KEGG" id="ctl:CTLon_0076"/>
<dbReference type="HOGENOM" id="CLU_065756_0_0_0"/>
<dbReference type="Proteomes" id="UP001154401">
    <property type="component" value="Chromosome"/>
</dbReference>
<dbReference type="GO" id="GO:0005737">
    <property type="term" value="C:cytoplasm"/>
    <property type="evidence" value="ECO:0007669"/>
    <property type="project" value="UniProtKB-SubCell"/>
</dbReference>
<dbReference type="GO" id="GO:0003755">
    <property type="term" value="F:peptidyl-prolyl cis-trans isomerase activity"/>
    <property type="evidence" value="ECO:0007669"/>
    <property type="project" value="UniProtKB-UniRule"/>
</dbReference>
<dbReference type="GO" id="GO:0051301">
    <property type="term" value="P:cell division"/>
    <property type="evidence" value="ECO:0007669"/>
    <property type="project" value="UniProtKB-KW"/>
</dbReference>
<dbReference type="GO" id="GO:0006457">
    <property type="term" value="P:protein folding"/>
    <property type="evidence" value="ECO:0007669"/>
    <property type="project" value="UniProtKB-UniRule"/>
</dbReference>
<dbReference type="GO" id="GO:0015031">
    <property type="term" value="P:protein transport"/>
    <property type="evidence" value="ECO:0007669"/>
    <property type="project" value="UniProtKB-UniRule"/>
</dbReference>
<dbReference type="FunFam" id="3.10.50.40:FF:000058">
    <property type="entry name" value="Trigger factor"/>
    <property type="match status" value="1"/>
</dbReference>
<dbReference type="Gene3D" id="3.10.50.40">
    <property type="match status" value="1"/>
</dbReference>
<dbReference type="Gene3D" id="3.30.70.1050">
    <property type="entry name" value="Trigger factor ribosome-binding domain"/>
    <property type="match status" value="1"/>
</dbReference>
<dbReference type="Gene3D" id="1.10.3120.10">
    <property type="entry name" value="Trigger factor, C-terminal domain"/>
    <property type="match status" value="1"/>
</dbReference>
<dbReference type="HAMAP" id="MF_00303">
    <property type="entry name" value="Trigger_factor_Tig"/>
    <property type="match status" value="1"/>
</dbReference>
<dbReference type="InterPro" id="IPR046357">
    <property type="entry name" value="PPIase_dom_sf"/>
</dbReference>
<dbReference type="InterPro" id="IPR005215">
    <property type="entry name" value="Trig_fac"/>
</dbReference>
<dbReference type="InterPro" id="IPR008880">
    <property type="entry name" value="Trigger_fac_C"/>
</dbReference>
<dbReference type="InterPro" id="IPR037041">
    <property type="entry name" value="Trigger_fac_C_sf"/>
</dbReference>
<dbReference type="InterPro" id="IPR008881">
    <property type="entry name" value="Trigger_fac_ribosome-bd_bac"/>
</dbReference>
<dbReference type="InterPro" id="IPR036611">
    <property type="entry name" value="Trigger_fac_ribosome-bd_sf"/>
</dbReference>
<dbReference type="InterPro" id="IPR027304">
    <property type="entry name" value="Trigger_fact/SurA_dom_sf"/>
</dbReference>
<dbReference type="NCBIfam" id="TIGR00115">
    <property type="entry name" value="tig"/>
    <property type="match status" value="1"/>
</dbReference>
<dbReference type="Pfam" id="PF05698">
    <property type="entry name" value="Trigger_C"/>
    <property type="match status" value="1"/>
</dbReference>
<dbReference type="Pfam" id="PF05697">
    <property type="entry name" value="Trigger_N"/>
    <property type="match status" value="1"/>
</dbReference>
<dbReference type="PIRSF" id="PIRSF003095">
    <property type="entry name" value="Trigger_factor"/>
    <property type="match status" value="1"/>
</dbReference>
<dbReference type="SUPFAM" id="SSF109998">
    <property type="entry name" value="Triger factor/SurA peptide-binding domain-like"/>
    <property type="match status" value="1"/>
</dbReference>
<dbReference type="SUPFAM" id="SSF102735">
    <property type="entry name" value="Trigger factor ribosome-binding domain"/>
    <property type="match status" value="1"/>
</dbReference>
<protein>
    <recommendedName>
        <fullName evidence="1">Trigger factor</fullName>
        <shortName evidence="1">TF</shortName>
        <ecNumber evidence="1">5.2.1.8</ecNumber>
    </recommendedName>
    <alternativeName>
        <fullName evidence="1">PPIase</fullName>
    </alternativeName>
</protein>
<gene>
    <name evidence="1" type="primary">tig</name>
    <name type="ordered locus">CTLon_0076</name>
</gene>
<reference key="1">
    <citation type="journal article" date="2008" name="Genome Res.">
        <title>Chlamydia trachomatis: genome sequence analysis of lymphogranuloma venereum isolates.</title>
        <authorList>
            <person name="Thomson N.R."/>
            <person name="Holden M.T.G."/>
            <person name="Carder C."/>
            <person name="Lennard N."/>
            <person name="Lockey S.J."/>
            <person name="Marsh P."/>
            <person name="Skipp P."/>
            <person name="O'Connor C.D."/>
            <person name="Goodhead I."/>
            <person name="Norbertzcak H."/>
            <person name="Harris B."/>
            <person name="Ormond D."/>
            <person name="Rance R."/>
            <person name="Quail M.A."/>
            <person name="Parkhill J."/>
            <person name="Stephens R.S."/>
            <person name="Clarke I.N."/>
        </authorList>
    </citation>
    <scope>NUCLEOTIDE SEQUENCE [LARGE SCALE GENOMIC DNA]</scope>
    <source>
        <strain>UCH-1/proctitis</strain>
    </source>
</reference>
<evidence type="ECO:0000255" key="1">
    <source>
        <dbReference type="HAMAP-Rule" id="MF_00303"/>
    </source>
</evidence>
<keyword id="KW-0131">Cell cycle</keyword>
<keyword id="KW-0132">Cell division</keyword>
<keyword id="KW-0143">Chaperone</keyword>
<keyword id="KW-0963">Cytoplasm</keyword>
<keyword id="KW-0413">Isomerase</keyword>
<keyword id="KW-0697">Rotamase</keyword>
<organism>
    <name type="scientific">Chlamydia trachomatis serovar L2b (strain UCH-1/proctitis)</name>
    <dbReference type="NCBI Taxonomy" id="471473"/>
    <lineage>
        <taxon>Bacteria</taxon>
        <taxon>Pseudomonadati</taxon>
        <taxon>Chlamydiota</taxon>
        <taxon>Chlamydiia</taxon>
        <taxon>Chlamydiales</taxon>
        <taxon>Chlamydiaceae</taxon>
        <taxon>Chlamydia/Chlamydophila group</taxon>
        <taxon>Chlamydia</taxon>
    </lineage>
</organism>
<name>TIG_CHLTB</name>
<proteinExistence type="inferred from homology"/>
<comment type="function">
    <text evidence="1">Involved in protein export. Acts as a chaperone by maintaining the newly synthesized protein in an open conformation. Functions as a peptidyl-prolyl cis-trans isomerase.</text>
</comment>
<comment type="catalytic activity">
    <reaction evidence="1">
        <text>[protein]-peptidylproline (omega=180) = [protein]-peptidylproline (omega=0)</text>
        <dbReference type="Rhea" id="RHEA:16237"/>
        <dbReference type="Rhea" id="RHEA-COMP:10747"/>
        <dbReference type="Rhea" id="RHEA-COMP:10748"/>
        <dbReference type="ChEBI" id="CHEBI:83833"/>
        <dbReference type="ChEBI" id="CHEBI:83834"/>
        <dbReference type="EC" id="5.2.1.8"/>
    </reaction>
</comment>
<comment type="subcellular location">
    <subcellularLocation>
        <location>Cytoplasm</location>
    </subcellularLocation>
    <text evidence="1">About half TF is bound to the ribosome near the polypeptide exit tunnel while the other half is free in the cytoplasm.</text>
</comment>
<comment type="domain">
    <text evidence="1">Consists of 3 domains; the N-terminus binds the ribosome, the middle domain has PPIase activity, while the C-terminus has intrinsic chaperone activity on its own.</text>
</comment>
<comment type="similarity">
    <text evidence="1">Belongs to the FKBP-type PPIase family. Tig subfamily.</text>
</comment>
<sequence length="442" mass="50098">MSSRDFSNDLFSINIEENAGCVVSAKVQANPLVTQKCHKEALKTVKKNVVLPGFRKGKAPDNIVESRYSTQVEQELRRLFLRASFEALSQMCDRKPLSPKAVRSSAIDTCNPVNGGSVSFLYEAFPVIPSLPWEQLSLPDPEPVKEISEEDLENGLKNVAYFFATKTPVTRPSQEGDFISLSLYVSKRGDENSTPVAIFENKYFKISEEDMTDSFKARFLNVSTGHRVEEEIGSEDIQSFLNGDLLTFTVNAVIEISSPEMDDEKARELQAESLEDLKKKLRIQLENQAKEAQHQKRFSDAEDALAQLIDFDLPESLLREREELLSREKLLNARLVKYCSDSELEEQKQALLEEAKADARKAVKLLFLTQKVFSEKGLSISREELQYMMDVCSRERFGGYPPKDISNEMIQELVLVARDRLTYRKAIEAISSEKKDLEVVPS</sequence>
<accession>B0BAG2</accession>